<sequence length="62" mass="6640">MTIAFQLAVFALIAISFILLISVPVVFASPEGWSNNKNVVFSGTSLWIGLVFLVGILNSLIS</sequence>
<evidence type="ECO:0000255" key="1">
    <source>
        <dbReference type="HAMAP-Rule" id="MF_00644"/>
    </source>
</evidence>
<feature type="chain" id="PRO_0000277217" description="Photosystem II reaction center protein Z">
    <location>
        <begin position="1"/>
        <end position="62"/>
    </location>
</feature>
<feature type="transmembrane region" description="Helical" evidence="1">
    <location>
        <begin position="8"/>
        <end position="28"/>
    </location>
</feature>
<feature type="transmembrane region" description="Helical" evidence="1">
    <location>
        <begin position="41"/>
        <end position="61"/>
    </location>
</feature>
<accession>Q2PMU0</accession>
<reference key="1">
    <citation type="journal article" date="2005" name="Plant Mol. Biol.">
        <title>Complete chloroplast genome sequence of Glycine max and comparative analyses with other legume genomes.</title>
        <authorList>
            <person name="Saski C."/>
            <person name="Lee S.-B."/>
            <person name="Daniell H."/>
            <person name="Wood T.C."/>
            <person name="Tomkins J."/>
            <person name="Kim H.-G."/>
            <person name="Jansen R.K."/>
        </authorList>
    </citation>
    <scope>NUCLEOTIDE SEQUENCE [LARGE SCALE GENOMIC DNA]</scope>
    <source>
        <strain>cv. PI 437654</strain>
    </source>
</reference>
<organism>
    <name type="scientific">Glycine max</name>
    <name type="common">Soybean</name>
    <name type="synonym">Glycine hispida</name>
    <dbReference type="NCBI Taxonomy" id="3847"/>
    <lineage>
        <taxon>Eukaryota</taxon>
        <taxon>Viridiplantae</taxon>
        <taxon>Streptophyta</taxon>
        <taxon>Embryophyta</taxon>
        <taxon>Tracheophyta</taxon>
        <taxon>Spermatophyta</taxon>
        <taxon>Magnoliopsida</taxon>
        <taxon>eudicotyledons</taxon>
        <taxon>Gunneridae</taxon>
        <taxon>Pentapetalae</taxon>
        <taxon>rosids</taxon>
        <taxon>fabids</taxon>
        <taxon>Fabales</taxon>
        <taxon>Fabaceae</taxon>
        <taxon>Papilionoideae</taxon>
        <taxon>50 kb inversion clade</taxon>
        <taxon>NPAAA clade</taxon>
        <taxon>indigoferoid/millettioid clade</taxon>
        <taxon>Phaseoleae</taxon>
        <taxon>Glycine</taxon>
        <taxon>Glycine subgen. Soja</taxon>
    </lineage>
</organism>
<gene>
    <name evidence="1" type="primary">psbZ</name>
</gene>
<name>PSBZ_SOYBN</name>
<dbReference type="EMBL" id="DQ317523">
    <property type="protein sequence ID" value="ABC25118.1"/>
    <property type="molecule type" value="Genomic_DNA"/>
</dbReference>
<dbReference type="RefSeq" id="YP_538758.1">
    <property type="nucleotide sequence ID" value="NC_007942.1"/>
</dbReference>
<dbReference type="SMR" id="Q2PMU0"/>
<dbReference type="FunCoup" id="Q2PMU0">
    <property type="interactions" value="76"/>
</dbReference>
<dbReference type="STRING" id="3847.Q2PMU0"/>
<dbReference type="PaxDb" id="3847-GLYMA01G11180.1"/>
<dbReference type="GeneID" id="3989281"/>
<dbReference type="KEGG" id="gmx:3989281"/>
<dbReference type="eggNOG" id="ENOG502S7KE">
    <property type="taxonomic scope" value="Eukaryota"/>
</dbReference>
<dbReference type="InParanoid" id="Q2PMU0"/>
<dbReference type="Proteomes" id="UP000008827">
    <property type="component" value="Chloroplast"/>
</dbReference>
<dbReference type="GO" id="GO:0009535">
    <property type="term" value="C:chloroplast thylakoid membrane"/>
    <property type="evidence" value="ECO:0007669"/>
    <property type="project" value="UniProtKB-SubCell"/>
</dbReference>
<dbReference type="GO" id="GO:0009539">
    <property type="term" value="C:photosystem II reaction center"/>
    <property type="evidence" value="ECO:0007669"/>
    <property type="project" value="InterPro"/>
</dbReference>
<dbReference type="GO" id="GO:0015979">
    <property type="term" value="P:photosynthesis"/>
    <property type="evidence" value="ECO:0007669"/>
    <property type="project" value="UniProtKB-UniRule"/>
</dbReference>
<dbReference type="GO" id="GO:0042549">
    <property type="term" value="P:photosystem II stabilization"/>
    <property type="evidence" value="ECO:0007669"/>
    <property type="project" value="InterPro"/>
</dbReference>
<dbReference type="FunFam" id="1.10.287.740:FF:000001">
    <property type="entry name" value="Photosystem II reaction center protein Z"/>
    <property type="match status" value="1"/>
</dbReference>
<dbReference type="Gene3D" id="1.10.287.740">
    <property type="entry name" value="Photosystem II PsbZ, reaction centre"/>
    <property type="match status" value="1"/>
</dbReference>
<dbReference type="HAMAP" id="MF_00644">
    <property type="entry name" value="PSII_PsbZ"/>
    <property type="match status" value="1"/>
</dbReference>
<dbReference type="InterPro" id="IPR002644">
    <property type="entry name" value="PSII_PsbZ"/>
</dbReference>
<dbReference type="InterPro" id="IPR036512">
    <property type="entry name" value="PSII_PsbZ_sf"/>
</dbReference>
<dbReference type="NCBIfam" id="TIGR03043">
    <property type="entry name" value="PS_II_psbZ"/>
    <property type="match status" value="1"/>
</dbReference>
<dbReference type="PANTHER" id="PTHR34971">
    <property type="entry name" value="PHOTOSYSTEM II REACTION CENTER PROTEIN Z"/>
    <property type="match status" value="1"/>
</dbReference>
<dbReference type="PANTHER" id="PTHR34971:SF2">
    <property type="entry name" value="PHOTOSYSTEM II REACTION CENTER PROTEIN Z"/>
    <property type="match status" value="1"/>
</dbReference>
<dbReference type="Pfam" id="PF01737">
    <property type="entry name" value="Ycf9"/>
    <property type="match status" value="1"/>
</dbReference>
<dbReference type="SUPFAM" id="SSF161055">
    <property type="entry name" value="PsbZ-like"/>
    <property type="match status" value="1"/>
</dbReference>
<geneLocation type="chloroplast"/>
<comment type="function">
    <text evidence="1">May control the interaction of photosystem II (PSII) cores with the light-harvesting antenna, regulates electron flow through the 2 photosystem reaction centers. PSII is a light-driven water plastoquinone oxidoreductase, using light energy to abstract electrons from H(2)O, generating a proton gradient subsequently used for ATP formation.</text>
</comment>
<comment type="subunit">
    <text evidence="1">PSII is composed of 1 copy each of membrane proteins PsbA, PsbB, PsbC, PsbD, PsbE, PsbF, PsbH, PsbI, PsbJ, PsbK, PsbL, PsbM, PsbT, PsbY, PsbZ, Psb30/Ycf12, at least 3 peripheral proteins of the oxygen-evolving complex and a large number of cofactors. It forms dimeric complexes.</text>
</comment>
<comment type="subcellular location">
    <subcellularLocation>
        <location evidence="1">Plastid</location>
        <location evidence="1">Chloroplast thylakoid membrane</location>
        <topology evidence="1">Multi-pass membrane protein</topology>
    </subcellularLocation>
</comment>
<comment type="similarity">
    <text evidence="1">Belongs to the PsbZ family.</text>
</comment>
<keyword id="KW-0150">Chloroplast</keyword>
<keyword id="KW-0472">Membrane</keyword>
<keyword id="KW-0602">Photosynthesis</keyword>
<keyword id="KW-0604">Photosystem II</keyword>
<keyword id="KW-0934">Plastid</keyword>
<keyword id="KW-0674">Reaction center</keyword>
<keyword id="KW-1185">Reference proteome</keyword>
<keyword id="KW-0793">Thylakoid</keyword>
<keyword id="KW-0812">Transmembrane</keyword>
<keyword id="KW-1133">Transmembrane helix</keyword>
<proteinExistence type="inferred from homology"/>
<protein>
    <recommendedName>
        <fullName evidence="1">Photosystem II reaction center protein Z</fullName>
        <shortName evidence="1">PSII-Z</shortName>
    </recommendedName>
</protein>